<proteinExistence type="inferred from homology"/>
<accession>Q4UME8</accession>
<comment type="function">
    <text evidence="1">Catalyzes the attachment of glutamate to tRNA(Glu) in a two-step reaction: glutamate is first activated by ATP to form Glu-AMP and then transferred to the acceptor end of tRNA(Glu).</text>
</comment>
<comment type="catalytic activity">
    <reaction evidence="1">
        <text>tRNA(Glu) + L-glutamate + ATP = L-glutamyl-tRNA(Glu) + AMP + diphosphate</text>
        <dbReference type="Rhea" id="RHEA:23540"/>
        <dbReference type="Rhea" id="RHEA-COMP:9663"/>
        <dbReference type="Rhea" id="RHEA-COMP:9680"/>
        <dbReference type="ChEBI" id="CHEBI:29985"/>
        <dbReference type="ChEBI" id="CHEBI:30616"/>
        <dbReference type="ChEBI" id="CHEBI:33019"/>
        <dbReference type="ChEBI" id="CHEBI:78442"/>
        <dbReference type="ChEBI" id="CHEBI:78520"/>
        <dbReference type="ChEBI" id="CHEBI:456215"/>
        <dbReference type="EC" id="6.1.1.17"/>
    </reaction>
</comment>
<comment type="subunit">
    <text evidence="1">Monomer.</text>
</comment>
<comment type="subcellular location">
    <subcellularLocation>
        <location evidence="1">Cytoplasm</location>
    </subcellularLocation>
</comment>
<comment type="similarity">
    <text evidence="1">Belongs to the class-I aminoacyl-tRNA synthetase family. Glutamate--tRNA ligase type 1 subfamily.</text>
</comment>
<name>SYE2_RICFE</name>
<dbReference type="EC" id="6.1.1.17" evidence="1"/>
<dbReference type="EMBL" id="CP000053">
    <property type="protein sequence ID" value="AAY61264.1"/>
    <property type="molecule type" value="Genomic_DNA"/>
</dbReference>
<dbReference type="SMR" id="Q4UME8"/>
<dbReference type="STRING" id="315456.RF_0413"/>
<dbReference type="KEGG" id="rfe:RF_0413"/>
<dbReference type="eggNOG" id="COG0008">
    <property type="taxonomic scope" value="Bacteria"/>
</dbReference>
<dbReference type="HOGENOM" id="CLU_015768_6_3_5"/>
<dbReference type="OrthoDB" id="9807503at2"/>
<dbReference type="Proteomes" id="UP000008548">
    <property type="component" value="Chromosome"/>
</dbReference>
<dbReference type="GO" id="GO:0005829">
    <property type="term" value="C:cytosol"/>
    <property type="evidence" value="ECO:0007669"/>
    <property type="project" value="TreeGrafter"/>
</dbReference>
<dbReference type="GO" id="GO:0005524">
    <property type="term" value="F:ATP binding"/>
    <property type="evidence" value="ECO:0007669"/>
    <property type="project" value="UniProtKB-UniRule"/>
</dbReference>
<dbReference type="GO" id="GO:0004818">
    <property type="term" value="F:glutamate-tRNA ligase activity"/>
    <property type="evidence" value="ECO:0007669"/>
    <property type="project" value="UniProtKB-UniRule"/>
</dbReference>
<dbReference type="GO" id="GO:0000049">
    <property type="term" value="F:tRNA binding"/>
    <property type="evidence" value="ECO:0007669"/>
    <property type="project" value="InterPro"/>
</dbReference>
<dbReference type="GO" id="GO:0008270">
    <property type="term" value="F:zinc ion binding"/>
    <property type="evidence" value="ECO:0007669"/>
    <property type="project" value="InterPro"/>
</dbReference>
<dbReference type="GO" id="GO:0006424">
    <property type="term" value="P:glutamyl-tRNA aminoacylation"/>
    <property type="evidence" value="ECO:0007669"/>
    <property type="project" value="UniProtKB-UniRule"/>
</dbReference>
<dbReference type="CDD" id="cd00808">
    <property type="entry name" value="GluRS_core"/>
    <property type="match status" value="1"/>
</dbReference>
<dbReference type="FunFam" id="3.40.50.620:FF:000007">
    <property type="entry name" value="Glutamate--tRNA ligase"/>
    <property type="match status" value="1"/>
</dbReference>
<dbReference type="Gene3D" id="1.10.10.350">
    <property type="match status" value="1"/>
</dbReference>
<dbReference type="Gene3D" id="3.40.50.620">
    <property type="entry name" value="HUPs"/>
    <property type="match status" value="1"/>
</dbReference>
<dbReference type="HAMAP" id="MF_00022">
    <property type="entry name" value="Glu_tRNA_synth_type1"/>
    <property type="match status" value="1"/>
</dbReference>
<dbReference type="InterPro" id="IPR045462">
    <property type="entry name" value="aa-tRNA-synth_I_cd-bd"/>
</dbReference>
<dbReference type="InterPro" id="IPR020751">
    <property type="entry name" value="aa-tRNA-synth_I_codon-bd_sub2"/>
</dbReference>
<dbReference type="InterPro" id="IPR008925">
    <property type="entry name" value="aa_tRNA-synth_I_cd-bd_sf"/>
</dbReference>
<dbReference type="InterPro" id="IPR004527">
    <property type="entry name" value="Glu-tRNA-ligase_bac/mito"/>
</dbReference>
<dbReference type="InterPro" id="IPR000924">
    <property type="entry name" value="Glu/Gln-tRNA-synth"/>
</dbReference>
<dbReference type="InterPro" id="IPR020058">
    <property type="entry name" value="Glu/Gln-tRNA-synth_Ib_cat-dom"/>
</dbReference>
<dbReference type="InterPro" id="IPR049940">
    <property type="entry name" value="GluQ/Sye"/>
</dbReference>
<dbReference type="InterPro" id="IPR033910">
    <property type="entry name" value="GluRS_core"/>
</dbReference>
<dbReference type="InterPro" id="IPR014729">
    <property type="entry name" value="Rossmann-like_a/b/a_fold"/>
</dbReference>
<dbReference type="NCBIfam" id="TIGR00464">
    <property type="entry name" value="gltX_bact"/>
    <property type="match status" value="1"/>
</dbReference>
<dbReference type="PANTHER" id="PTHR43311">
    <property type="entry name" value="GLUTAMATE--TRNA LIGASE"/>
    <property type="match status" value="1"/>
</dbReference>
<dbReference type="PANTHER" id="PTHR43311:SF2">
    <property type="entry name" value="GLUTAMATE--TRNA LIGASE, MITOCHONDRIAL-RELATED"/>
    <property type="match status" value="1"/>
</dbReference>
<dbReference type="Pfam" id="PF19269">
    <property type="entry name" value="Anticodon_2"/>
    <property type="match status" value="1"/>
</dbReference>
<dbReference type="Pfam" id="PF00749">
    <property type="entry name" value="tRNA-synt_1c"/>
    <property type="match status" value="1"/>
</dbReference>
<dbReference type="PRINTS" id="PR00987">
    <property type="entry name" value="TRNASYNTHGLU"/>
</dbReference>
<dbReference type="SUPFAM" id="SSF48163">
    <property type="entry name" value="An anticodon-binding domain of class I aminoacyl-tRNA synthetases"/>
    <property type="match status" value="1"/>
</dbReference>
<dbReference type="SUPFAM" id="SSF52374">
    <property type="entry name" value="Nucleotidylyl transferase"/>
    <property type="match status" value="1"/>
</dbReference>
<feature type="chain" id="PRO_0000237397" description="Glutamate--tRNA ligase 2">
    <location>
        <begin position="1"/>
        <end position="463"/>
    </location>
</feature>
<feature type="short sequence motif" description="'HIGH' region" evidence="1">
    <location>
        <begin position="10"/>
        <end position="20"/>
    </location>
</feature>
<feature type="short sequence motif" description="'KMSKS' region" evidence="1">
    <location>
        <begin position="239"/>
        <end position="243"/>
    </location>
</feature>
<feature type="binding site" evidence="1">
    <location>
        <position position="242"/>
    </location>
    <ligand>
        <name>ATP</name>
        <dbReference type="ChEBI" id="CHEBI:30616"/>
    </ligand>
</feature>
<gene>
    <name evidence="1" type="primary">gltX2</name>
    <name type="ordered locus">RF_0413</name>
</gene>
<protein>
    <recommendedName>
        <fullName evidence="1">Glutamate--tRNA ligase 2</fullName>
        <ecNumber evidence="1">6.1.1.17</ecNumber>
    </recommendedName>
    <alternativeName>
        <fullName evidence="1">Glutamyl-tRNA synthetase 2</fullName>
        <shortName evidence="1">GluRS 2</shortName>
    </alternativeName>
</protein>
<keyword id="KW-0030">Aminoacyl-tRNA synthetase</keyword>
<keyword id="KW-0067">ATP-binding</keyword>
<keyword id="KW-0963">Cytoplasm</keyword>
<keyword id="KW-0436">Ligase</keyword>
<keyword id="KW-0547">Nucleotide-binding</keyword>
<keyword id="KW-0648">Protein biosynthesis</keyword>
<reference key="1">
    <citation type="journal article" date="2005" name="PLoS Biol.">
        <title>The genome sequence of Rickettsia felis identifies the first putative conjugative plasmid in an obligate intracellular parasite.</title>
        <authorList>
            <person name="Ogata H."/>
            <person name="Renesto P."/>
            <person name="Audic S."/>
            <person name="Robert C."/>
            <person name="Blanc G."/>
            <person name="Fournier P.-E."/>
            <person name="Parinello H."/>
            <person name="Claverie J.-M."/>
            <person name="Raoult D."/>
        </authorList>
    </citation>
    <scope>NUCLEOTIDE SEQUENCE [LARGE SCALE GENOMIC DNA]</scope>
    <source>
        <strain>ATCC VR-1525 / URRWXCal2</strain>
    </source>
</reference>
<sequence>MTNVITRFAPSPTGFLHIGSARTALFNYLFARHHNGKFLLRIEDTDKERSTKEAVEAIFSGLKWLGLDWDGEVIFQSKRNNLYKEAALRLLQEGKAYYCFTSQEEIERQRQKALENKQHFIFNSEWRDKDSSTYPTDIKPVIRLKVPREGSITIHDTLQGDVVIENSHIDDMVLLRADGTATYMLAVVVDDHDMGITHIIRGDDHLTNAARQIAIYHAFGYEVPSMTHIPLIHGADGAKLSKRHGALGVEAYKDMGYLPESLCNYLLRLGWSHGDDEIISMTQAIEWFNLDSLGKSPSKLDFAKMNSLNAHYLRMLDNDSLTSKTVEILKQNYKISEKEVSYIKQAMPSLLVRSETLLDLAKLARIYLINSPIIYEQEAKEIIENCDKDLIKQVIEGLNKIEQFDKESVQNKFKEIATHNGLKLNDIMKPVRALITGMTASPSVFEIAEILGKENILKRLKII</sequence>
<evidence type="ECO:0000255" key="1">
    <source>
        <dbReference type="HAMAP-Rule" id="MF_00022"/>
    </source>
</evidence>
<organism>
    <name type="scientific">Rickettsia felis (strain ATCC VR-1525 / URRWXCal2)</name>
    <name type="common">Rickettsia azadi</name>
    <dbReference type="NCBI Taxonomy" id="315456"/>
    <lineage>
        <taxon>Bacteria</taxon>
        <taxon>Pseudomonadati</taxon>
        <taxon>Pseudomonadota</taxon>
        <taxon>Alphaproteobacteria</taxon>
        <taxon>Rickettsiales</taxon>
        <taxon>Rickettsiaceae</taxon>
        <taxon>Rickettsieae</taxon>
        <taxon>Rickettsia</taxon>
        <taxon>spotted fever group</taxon>
    </lineage>
</organism>